<evidence type="ECO:0000250" key="1">
    <source>
        <dbReference type="UniProtKB" id="P51671"/>
    </source>
</evidence>
<evidence type="ECO:0000255" key="2"/>
<evidence type="ECO:0000269" key="3">
    <source>
    </source>
</evidence>
<evidence type="ECO:0000269" key="4">
    <source>
    </source>
</evidence>
<evidence type="ECO:0000269" key="5">
    <source>
    </source>
</evidence>
<evidence type="ECO:0000305" key="6"/>
<evidence type="ECO:0000305" key="7">
    <source>
    </source>
</evidence>
<gene>
    <name type="primary">Ccl11</name>
    <name type="synonym">Scya11</name>
</gene>
<keyword id="KW-0145">Chemotaxis</keyword>
<keyword id="KW-0202">Cytokine</keyword>
<keyword id="KW-1015">Disulfide bond</keyword>
<keyword id="KW-0325">Glycoprotein</keyword>
<keyword id="KW-0395">Inflammatory response</keyword>
<keyword id="KW-1185">Reference proteome</keyword>
<keyword id="KW-0964">Secreted</keyword>
<keyword id="KW-0732">Signal</keyword>
<proteinExistence type="evidence at transcript level"/>
<organism>
    <name type="scientific">Mus musculus</name>
    <name type="common">Mouse</name>
    <dbReference type="NCBI Taxonomy" id="10090"/>
    <lineage>
        <taxon>Eukaryota</taxon>
        <taxon>Metazoa</taxon>
        <taxon>Chordata</taxon>
        <taxon>Craniata</taxon>
        <taxon>Vertebrata</taxon>
        <taxon>Euteleostomi</taxon>
        <taxon>Mammalia</taxon>
        <taxon>Eutheria</taxon>
        <taxon>Euarchontoglires</taxon>
        <taxon>Glires</taxon>
        <taxon>Rodentia</taxon>
        <taxon>Myomorpha</taxon>
        <taxon>Muroidea</taxon>
        <taxon>Muridae</taxon>
        <taxon>Murinae</taxon>
        <taxon>Mus</taxon>
        <taxon>Mus</taxon>
    </lineage>
</organism>
<comment type="function">
    <text evidence="1 4 5">In response to the presence of allergens, this protein directly promotes the accumulation of eosinophils (a prominent feature of allergic inflammatory reactions), but not lymphocytes, macrophages or neutrophils (PubMed:7568052, PubMed:8574847). Binds to CCR3 (By similarity).</text>
</comment>
<comment type="subcellular location">
    <subcellularLocation>
        <location evidence="7">Secreted</location>
    </subcellularLocation>
</comment>
<comment type="tissue specificity">
    <text evidence="4">Expressed constitutively in the thymus. Expression inducible in the lung (type I alveolar epithelial cells), intestine, heart, spleen, kidney.</text>
</comment>
<comment type="induction">
    <text evidence="3 4">By interferon gamma and lipopolysaccharides (LPS) (PubMed:7568052). By interleukin-13 (IL13) (PubMed:15647285).</text>
</comment>
<comment type="similarity">
    <text evidence="6">Belongs to the intercrine beta (chemokine CC) family.</text>
</comment>
<name>CCL11_MOUSE</name>
<accession>P48298</accession>
<feature type="signal peptide" evidence="2">
    <location>
        <begin position="1"/>
        <end position="23"/>
    </location>
</feature>
<feature type="chain" id="PRO_0000005197" description="Eotaxin">
    <location>
        <begin position="24"/>
        <end position="97"/>
    </location>
</feature>
<feature type="glycosylation site" description="O-linked (GalNAc...) threonine" evidence="1">
    <location>
        <position position="94"/>
    </location>
</feature>
<feature type="disulfide bond" evidence="1">
    <location>
        <begin position="32"/>
        <end position="57"/>
    </location>
</feature>
<feature type="disulfide bond" evidence="1">
    <location>
        <begin position="33"/>
        <end position="73"/>
    </location>
</feature>
<protein>
    <recommendedName>
        <fullName>Eotaxin</fullName>
    </recommendedName>
    <alternativeName>
        <fullName>C-C motif chemokine 11</fullName>
    </alternativeName>
    <alternativeName>
        <fullName>Eosinophil chemotactic protein</fullName>
    </alternativeName>
    <alternativeName>
        <fullName>Small-inducible cytokine A11</fullName>
    </alternativeName>
</protein>
<reference key="1">
    <citation type="journal article" date="1995" name="Proc. Natl. Acad. Sci. U.S.A.">
        <title>Murine eotaxin: an eosinophil chemoattractant inducible in endothelial cells and in interleukin 4-induced tumor suppression.</title>
        <authorList>
            <person name="Rothenberg M.E."/>
            <person name="Luster A.D."/>
            <person name="Leder P."/>
        </authorList>
    </citation>
    <scope>NUCLEOTIDE SEQUENCE [MRNA]</scope>
    <scope>FUNCTION</scope>
    <scope>SUBCELLULAR LOCATION</scope>
    <scope>TISSUE SPECIFICITY</scope>
    <scope>INDUCTION</scope>
    <source>
        <tissue>Lung</tissue>
    </source>
</reference>
<reference key="2">
    <citation type="journal article" date="1996" name="Immunity">
        <title>Mouse eotaxin expression parallels eosinophil accumulation during lung allergic inflammation but it is not restricted to a Th2-type response.</title>
        <authorList>
            <person name="Gonzalo J.-A."/>
            <person name="Jia G.-Q."/>
            <person name="Aguirre V."/>
            <person name="Friend D."/>
            <person name="Coyle A.J."/>
            <person name="Jenkins N.A."/>
            <person name="Lin G.-S."/>
            <person name="Katz H."/>
            <person name="Lichtman A."/>
            <person name="Copeland N.G."/>
            <person name="Kopf M."/>
            <person name="Gutierrez-Ramos J.-C."/>
        </authorList>
    </citation>
    <scope>NUCLEOTIDE SEQUENCE [MRNA]</scope>
    <scope>FUNCTION</scope>
    <source>
        <strain>C57BL/6J</strain>
        <tissue>Lung</tissue>
    </source>
</reference>
<reference key="3">
    <citation type="journal article" date="1999" name="J. Immunol.">
        <title>Sequence polymorphisms in the chemokines Scya1 (TCA-3), Scya2 (monocyte chemoattractant protein (MCP)-1), and Scya12 (MCP-5) are candidates for eae7, a locus controlling susceptibility to monophasic remitting/nonrelapsing experimental allergic encephalomyelitis.</title>
        <authorList>
            <person name="Teuscher C."/>
            <person name="Butterfield R.J."/>
            <person name="Ma R.Z."/>
            <person name="Zachary J.F."/>
            <person name="Doerge R.W."/>
            <person name="Blankenhorn E.P."/>
        </authorList>
    </citation>
    <scope>NUCLEOTIDE SEQUENCE</scope>
    <source>
        <strain>B10.S/J</strain>
        <strain>BALB/cJ</strain>
        <strain>DBA/2J</strain>
        <strain>NOD/LtJ</strain>
        <strain>SJL/J</strain>
        <tissue>Spleen</tissue>
    </source>
</reference>
<reference key="4">
    <citation type="journal article" date="2005" name="Science">
        <title>The transcriptional landscape of the mammalian genome.</title>
        <authorList>
            <person name="Carninci P."/>
            <person name="Kasukawa T."/>
            <person name="Katayama S."/>
            <person name="Gough J."/>
            <person name="Frith M.C."/>
            <person name="Maeda N."/>
            <person name="Oyama R."/>
            <person name="Ravasi T."/>
            <person name="Lenhard B."/>
            <person name="Wells C."/>
            <person name="Kodzius R."/>
            <person name="Shimokawa K."/>
            <person name="Bajic V.B."/>
            <person name="Brenner S.E."/>
            <person name="Batalov S."/>
            <person name="Forrest A.R."/>
            <person name="Zavolan M."/>
            <person name="Davis M.J."/>
            <person name="Wilming L.G."/>
            <person name="Aidinis V."/>
            <person name="Allen J.E."/>
            <person name="Ambesi-Impiombato A."/>
            <person name="Apweiler R."/>
            <person name="Aturaliya R.N."/>
            <person name="Bailey T.L."/>
            <person name="Bansal M."/>
            <person name="Baxter L."/>
            <person name="Beisel K.W."/>
            <person name="Bersano T."/>
            <person name="Bono H."/>
            <person name="Chalk A.M."/>
            <person name="Chiu K.P."/>
            <person name="Choudhary V."/>
            <person name="Christoffels A."/>
            <person name="Clutterbuck D.R."/>
            <person name="Crowe M.L."/>
            <person name="Dalla E."/>
            <person name="Dalrymple B.P."/>
            <person name="de Bono B."/>
            <person name="Della Gatta G."/>
            <person name="di Bernardo D."/>
            <person name="Down T."/>
            <person name="Engstrom P."/>
            <person name="Fagiolini M."/>
            <person name="Faulkner G."/>
            <person name="Fletcher C.F."/>
            <person name="Fukushima T."/>
            <person name="Furuno M."/>
            <person name="Futaki S."/>
            <person name="Gariboldi M."/>
            <person name="Georgii-Hemming P."/>
            <person name="Gingeras T.R."/>
            <person name="Gojobori T."/>
            <person name="Green R.E."/>
            <person name="Gustincich S."/>
            <person name="Harbers M."/>
            <person name="Hayashi Y."/>
            <person name="Hensch T.K."/>
            <person name="Hirokawa N."/>
            <person name="Hill D."/>
            <person name="Huminiecki L."/>
            <person name="Iacono M."/>
            <person name="Ikeo K."/>
            <person name="Iwama A."/>
            <person name="Ishikawa T."/>
            <person name="Jakt M."/>
            <person name="Kanapin A."/>
            <person name="Katoh M."/>
            <person name="Kawasawa Y."/>
            <person name="Kelso J."/>
            <person name="Kitamura H."/>
            <person name="Kitano H."/>
            <person name="Kollias G."/>
            <person name="Krishnan S.P."/>
            <person name="Kruger A."/>
            <person name="Kummerfeld S.K."/>
            <person name="Kurochkin I.V."/>
            <person name="Lareau L.F."/>
            <person name="Lazarevic D."/>
            <person name="Lipovich L."/>
            <person name="Liu J."/>
            <person name="Liuni S."/>
            <person name="McWilliam S."/>
            <person name="Madan Babu M."/>
            <person name="Madera M."/>
            <person name="Marchionni L."/>
            <person name="Matsuda H."/>
            <person name="Matsuzawa S."/>
            <person name="Miki H."/>
            <person name="Mignone F."/>
            <person name="Miyake S."/>
            <person name="Morris K."/>
            <person name="Mottagui-Tabar S."/>
            <person name="Mulder N."/>
            <person name="Nakano N."/>
            <person name="Nakauchi H."/>
            <person name="Ng P."/>
            <person name="Nilsson R."/>
            <person name="Nishiguchi S."/>
            <person name="Nishikawa S."/>
            <person name="Nori F."/>
            <person name="Ohara O."/>
            <person name="Okazaki Y."/>
            <person name="Orlando V."/>
            <person name="Pang K.C."/>
            <person name="Pavan W.J."/>
            <person name="Pavesi G."/>
            <person name="Pesole G."/>
            <person name="Petrovsky N."/>
            <person name="Piazza S."/>
            <person name="Reed J."/>
            <person name="Reid J.F."/>
            <person name="Ring B.Z."/>
            <person name="Ringwald M."/>
            <person name="Rost B."/>
            <person name="Ruan Y."/>
            <person name="Salzberg S.L."/>
            <person name="Sandelin A."/>
            <person name="Schneider C."/>
            <person name="Schoenbach C."/>
            <person name="Sekiguchi K."/>
            <person name="Semple C.A."/>
            <person name="Seno S."/>
            <person name="Sessa L."/>
            <person name="Sheng Y."/>
            <person name="Shibata Y."/>
            <person name="Shimada H."/>
            <person name="Shimada K."/>
            <person name="Silva D."/>
            <person name="Sinclair B."/>
            <person name="Sperling S."/>
            <person name="Stupka E."/>
            <person name="Sugiura K."/>
            <person name="Sultana R."/>
            <person name="Takenaka Y."/>
            <person name="Taki K."/>
            <person name="Tammoja K."/>
            <person name="Tan S.L."/>
            <person name="Tang S."/>
            <person name="Taylor M.S."/>
            <person name="Tegner J."/>
            <person name="Teichmann S.A."/>
            <person name="Ueda H.R."/>
            <person name="van Nimwegen E."/>
            <person name="Verardo R."/>
            <person name="Wei C.L."/>
            <person name="Yagi K."/>
            <person name="Yamanishi H."/>
            <person name="Zabarovsky E."/>
            <person name="Zhu S."/>
            <person name="Zimmer A."/>
            <person name="Hide W."/>
            <person name="Bult C."/>
            <person name="Grimmond S.M."/>
            <person name="Teasdale R.D."/>
            <person name="Liu E.T."/>
            <person name="Brusic V."/>
            <person name="Quackenbush J."/>
            <person name="Wahlestedt C."/>
            <person name="Mattick J.S."/>
            <person name="Hume D.A."/>
            <person name="Kai C."/>
            <person name="Sasaki D."/>
            <person name="Tomaru Y."/>
            <person name="Fukuda S."/>
            <person name="Kanamori-Katayama M."/>
            <person name="Suzuki M."/>
            <person name="Aoki J."/>
            <person name="Arakawa T."/>
            <person name="Iida J."/>
            <person name="Imamura K."/>
            <person name="Itoh M."/>
            <person name="Kato T."/>
            <person name="Kawaji H."/>
            <person name="Kawagashira N."/>
            <person name="Kawashima T."/>
            <person name="Kojima M."/>
            <person name="Kondo S."/>
            <person name="Konno H."/>
            <person name="Nakano K."/>
            <person name="Ninomiya N."/>
            <person name="Nishio T."/>
            <person name="Okada M."/>
            <person name="Plessy C."/>
            <person name="Shibata K."/>
            <person name="Shiraki T."/>
            <person name="Suzuki S."/>
            <person name="Tagami M."/>
            <person name="Waki K."/>
            <person name="Watahiki A."/>
            <person name="Okamura-Oho Y."/>
            <person name="Suzuki H."/>
            <person name="Kawai J."/>
            <person name="Hayashizaki Y."/>
        </authorList>
    </citation>
    <scope>NUCLEOTIDE SEQUENCE [LARGE SCALE MRNA]</scope>
    <source>
        <strain>C57BL/6J</strain>
        <tissue>Tongue</tissue>
    </source>
</reference>
<reference key="5">
    <citation type="journal article" date="2004" name="Genome Res.">
        <title>The status, quality, and expansion of the NIH full-length cDNA project: the Mammalian Gene Collection (MGC).</title>
        <authorList>
            <consortium name="The MGC Project Team"/>
        </authorList>
    </citation>
    <scope>NUCLEOTIDE SEQUENCE [LARGE SCALE MRNA]</scope>
    <source>
        <tissue>Mammary gland</tissue>
    </source>
</reference>
<reference key="6">
    <citation type="journal article" date="1997" name="Genomics">
        <title>Genomic organization, complete sequence, and chromosomal location of the gene for human eotaxin (SCYA11), an eosinophil-specific CC chemokine.</title>
        <authorList>
            <person name="Garcia-Zepeda E.A."/>
            <person name="Rothenberg M.E."/>
            <person name="Weremowicz S."/>
            <person name="Sarafi M.N."/>
            <person name="Morton C.C."/>
            <person name="Luster A.D."/>
        </authorList>
    </citation>
    <scope>NUCLEOTIDE SEQUENCE [GENOMIC DNA] OF 1-14</scope>
</reference>
<reference key="7">
    <citation type="journal article" date="2005" name="J. Biol. Chem.">
        <title>Identification of a cooperative mechanism involving interleukin-13 and eotaxin-2 in experimental allergic lung inflammation.</title>
        <authorList>
            <person name="Pope S.M."/>
            <person name="Fulkerson P.C."/>
            <person name="Blanchard C."/>
            <person name="Saito Akei H."/>
            <person name="Nikolaidis N.M."/>
            <person name="Zimmermann N."/>
            <person name="Molkentin J.D."/>
            <person name="Rothenberg M.E."/>
        </authorList>
    </citation>
    <scope>INDUCTION</scope>
</reference>
<dbReference type="EMBL" id="U26426">
    <property type="protein sequence ID" value="AAC52256.1"/>
    <property type="molecule type" value="mRNA"/>
</dbReference>
<dbReference type="EMBL" id="U40672">
    <property type="protein sequence ID" value="AAA99776.1"/>
    <property type="molecule type" value="mRNA"/>
</dbReference>
<dbReference type="EMBL" id="AF128205">
    <property type="protein sequence ID" value="AAF22546.1"/>
    <property type="molecule type" value="mRNA"/>
</dbReference>
<dbReference type="EMBL" id="AF128206">
    <property type="protein sequence ID" value="AAF22547.1"/>
    <property type="molecule type" value="mRNA"/>
</dbReference>
<dbReference type="EMBL" id="AF128207">
    <property type="protein sequence ID" value="AAF22548.1"/>
    <property type="molecule type" value="mRNA"/>
</dbReference>
<dbReference type="EMBL" id="AF128208">
    <property type="protein sequence ID" value="AAF22549.1"/>
    <property type="molecule type" value="mRNA"/>
</dbReference>
<dbReference type="EMBL" id="AF128209">
    <property type="protein sequence ID" value="AAF22550.1"/>
    <property type="molecule type" value="mRNA"/>
</dbReference>
<dbReference type="EMBL" id="AK010146">
    <property type="protein sequence ID" value="BAB26731.1"/>
    <property type="molecule type" value="mRNA"/>
</dbReference>
<dbReference type="EMBL" id="BC027521">
    <property type="protein sequence ID" value="AAH27521.1"/>
    <property type="molecule type" value="mRNA"/>
</dbReference>
<dbReference type="EMBL" id="U77462">
    <property type="protein sequence ID" value="AAC53321.1"/>
    <property type="molecule type" value="Genomic_DNA"/>
</dbReference>
<dbReference type="CCDS" id="CCDS36246.1"/>
<dbReference type="RefSeq" id="NP_035460.1">
    <property type="nucleotide sequence ID" value="NM_011330.3"/>
</dbReference>
<dbReference type="SMR" id="P48298"/>
<dbReference type="BioGRID" id="203117">
    <property type="interactions" value="1"/>
</dbReference>
<dbReference type="FunCoup" id="P48298">
    <property type="interactions" value="856"/>
</dbReference>
<dbReference type="STRING" id="10090.ENSMUSP00000000342"/>
<dbReference type="GlyCosmos" id="P48298">
    <property type="glycosylation" value="1 site, No reported glycans"/>
</dbReference>
<dbReference type="GlyGen" id="P48298">
    <property type="glycosylation" value="1 site"/>
</dbReference>
<dbReference type="iPTMnet" id="P48298"/>
<dbReference type="PhosphoSitePlus" id="P48298"/>
<dbReference type="PaxDb" id="10090-ENSMUSP00000000342"/>
<dbReference type="ABCD" id="P48298">
    <property type="antibodies" value="1 sequenced antibody"/>
</dbReference>
<dbReference type="Antibodypedia" id="15485">
    <property type="antibodies" value="418 antibodies from 43 providers"/>
</dbReference>
<dbReference type="DNASU" id="20292"/>
<dbReference type="Ensembl" id="ENSMUST00000000342.3">
    <property type="protein sequence ID" value="ENSMUSP00000000342.3"/>
    <property type="gene ID" value="ENSMUSG00000020676.3"/>
</dbReference>
<dbReference type="GeneID" id="20292"/>
<dbReference type="KEGG" id="mmu:20292"/>
<dbReference type="UCSC" id="uc007kmr.2">
    <property type="organism name" value="mouse"/>
</dbReference>
<dbReference type="AGR" id="MGI:103576"/>
<dbReference type="CTD" id="6356"/>
<dbReference type="MGI" id="MGI:103576">
    <property type="gene designation" value="Ccl11"/>
</dbReference>
<dbReference type="VEuPathDB" id="HostDB:ENSMUSG00000020676"/>
<dbReference type="eggNOG" id="ENOG502S8M4">
    <property type="taxonomic scope" value="Eukaryota"/>
</dbReference>
<dbReference type="GeneTree" id="ENSGT01130000278316"/>
<dbReference type="HOGENOM" id="CLU_141716_1_0_1"/>
<dbReference type="InParanoid" id="P48298"/>
<dbReference type="OMA" id="SKCPQTA"/>
<dbReference type="OrthoDB" id="8934837at2759"/>
<dbReference type="PhylomeDB" id="P48298"/>
<dbReference type="TreeFam" id="TF334888"/>
<dbReference type="Reactome" id="R-MMU-380108">
    <property type="pathway name" value="Chemokine receptors bind chemokines"/>
</dbReference>
<dbReference type="Reactome" id="R-MMU-418594">
    <property type="pathway name" value="G alpha (i) signalling events"/>
</dbReference>
<dbReference type="BioGRID-ORCS" id="20292">
    <property type="hits" value="2 hits in 78 CRISPR screens"/>
</dbReference>
<dbReference type="PRO" id="PR:P48298"/>
<dbReference type="Proteomes" id="UP000000589">
    <property type="component" value="Chromosome 11"/>
</dbReference>
<dbReference type="RNAct" id="P48298">
    <property type="molecule type" value="protein"/>
</dbReference>
<dbReference type="Bgee" id="ENSMUSG00000020676">
    <property type="expression patterns" value="Expressed in uterine cervix and 101 other cell types or tissues"/>
</dbReference>
<dbReference type="GO" id="GO:0005615">
    <property type="term" value="C:extracellular space"/>
    <property type="evidence" value="ECO:0007669"/>
    <property type="project" value="UniProtKB-KW"/>
</dbReference>
<dbReference type="GO" id="GO:0031728">
    <property type="term" value="F:CCR3 chemokine receptor binding"/>
    <property type="evidence" value="ECO:0007669"/>
    <property type="project" value="Ensembl"/>
</dbReference>
<dbReference type="GO" id="GO:0008009">
    <property type="term" value="F:chemokine activity"/>
    <property type="evidence" value="ECO:0007669"/>
    <property type="project" value="Ensembl"/>
</dbReference>
<dbReference type="GO" id="GO:0046983">
    <property type="term" value="F:protein dimerization activity"/>
    <property type="evidence" value="ECO:0007669"/>
    <property type="project" value="Ensembl"/>
</dbReference>
<dbReference type="GO" id="GO:0007015">
    <property type="term" value="P:actin filament organization"/>
    <property type="evidence" value="ECO:0007669"/>
    <property type="project" value="Ensembl"/>
</dbReference>
<dbReference type="GO" id="GO:0060444">
    <property type="term" value="P:branching involved in mammary gland duct morphogenesis"/>
    <property type="evidence" value="ECO:0000315"/>
    <property type="project" value="MGI"/>
</dbReference>
<dbReference type="GO" id="GO:0002544">
    <property type="term" value="P:chronic inflammatory response"/>
    <property type="evidence" value="ECO:0007669"/>
    <property type="project" value="Ensembl"/>
</dbReference>
<dbReference type="GO" id="GO:0048245">
    <property type="term" value="P:eosinophil chemotaxis"/>
    <property type="evidence" value="ECO:0007669"/>
    <property type="project" value="Ensembl"/>
</dbReference>
<dbReference type="GO" id="GO:0070371">
    <property type="term" value="P:ERK1 and ERK2 cascade"/>
    <property type="evidence" value="ECO:0007669"/>
    <property type="project" value="Ensembl"/>
</dbReference>
<dbReference type="GO" id="GO:0006955">
    <property type="term" value="P:immune response"/>
    <property type="evidence" value="ECO:0007669"/>
    <property type="project" value="InterPro"/>
</dbReference>
<dbReference type="GO" id="GO:0007611">
    <property type="term" value="P:learning or memory"/>
    <property type="evidence" value="ECO:0000314"/>
    <property type="project" value="ARUK-UCL"/>
</dbReference>
<dbReference type="GO" id="GO:0060763">
    <property type="term" value="P:mammary duct terminal end bud growth"/>
    <property type="evidence" value="ECO:0000315"/>
    <property type="project" value="MGI"/>
</dbReference>
<dbReference type="GO" id="GO:0002551">
    <property type="term" value="P:mast cell chemotaxis"/>
    <property type="evidence" value="ECO:0007669"/>
    <property type="project" value="Ensembl"/>
</dbReference>
<dbReference type="GO" id="GO:0050768">
    <property type="term" value="P:negative regulation of neurogenesis"/>
    <property type="evidence" value="ECO:0000314"/>
    <property type="project" value="ARUK-UCL"/>
</dbReference>
<dbReference type="GO" id="GO:0030838">
    <property type="term" value="P:positive regulation of actin filament polymerization"/>
    <property type="evidence" value="ECO:0007669"/>
    <property type="project" value="Ensembl"/>
</dbReference>
<dbReference type="GO" id="GO:0045766">
    <property type="term" value="P:positive regulation of angiogenesis"/>
    <property type="evidence" value="ECO:0000315"/>
    <property type="project" value="BHF-UCL"/>
</dbReference>
<dbReference type="GO" id="GO:0030335">
    <property type="term" value="P:positive regulation of cell migration"/>
    <property type="evidence" value="ECO:0007669"/>
    <property type="project" value="Ensembl"/>
</dbReference>
<dbReference type="GO" id="GO:0001938">
    <property type="term" value="P:positive regulation of endothelial cell proliferation"/>
    <property type="evidence" value="ECO:0007669"/>
    <property type="project" value="Ensembl"/>
</dbReference>
<dbReference type="GO" id="GO:0008360">
    <property type="term" value="P:regulation of cell shape"/>
    <property type="evidence" value="ECO:0007669"/>
    <property type="project" value="Ensembl"/>
</dbReference>
<dbReference type="GO" id="GO:0035962">
    <property type="term" value="P:response to interleukin-13"/>
    <property type="evidence" value="ECO:0007669"/>
    <property type="project" value="Ensembl"/>
</dbReference>
<dbReference type="GO" id="GO:0070670">
    <property type="term" value="P:response to interleukin-4"/>
    <property type="evidence" value="ECO:0007669"/>
    <property type="project" value="Ensembl"/>
</dbReference>
<dbReference type="CDD" id="cd00272">
    <property type="entry name" value="Chemokine_CC"/>
    <property type="match status" value="1"/>
</dbReference>
<dbReference type="FunFam" id="2.40.50.40:FF:000002">
    <property type="entry name" value="C-C motif chemokine"/>
    <property type="match status" value="1"/>
</dbReference>
<dbReference type="Gene3D" id="2.40.50.40">
    <property type="match status" value="1"/>
</dbReference>
<dbReference type="InterPro" id="IPR039809">
    <property type="entry name" value="Chemokine_b/g/d"/>
</dbReference>
<dbReference type="InterPro" id="IPR000827">
    <property type="entry name" value="Chemokine_CC_CS"/>
</dbReference>
<dbReference type="InterPro" id="IPR001811">
    <property type="entry name" value="Chemokine_IL8-like_dom"/>
</dbReference>
<dbReference type="InterPro" id="IPR036048">
    <property type="entry name" value="Interleukin_8-like_sf"/>
</dbReference>
<dbReference type="PANTHER" id="PTHR12015:SF147">
    <property type="entry name" value="C-C MOTIF CHEMOKINE 13"/>
    <property type="match status" value="1"/>
</dbReference>
<dbReference type="PANTHER" id="PTHR12015">
    <property type="entry name" value="SMALL INDUCIBLE CYTOKINE A"/>
    <property type="match status" value="1"/>
</dbReference>
<dbReference type="Pfam" id="PF00048">
    <property type="entry name" value="IL8"/>
    <property type="match status" value="1"/>
</dbReference>
<dbReference type="SMART" id="SM00199">
    <property type="entry name" value="SCY"/>
    <property type="match status" value="1"/>
</dbReference>
<dbReference type="SUPFAM" id="SSF54117">
    <property type="entry name" value="Interleukin 8-like chemokines"/>
    <property type="match status" value="1"/>
</dbReference>
<dbReference type="PROSITE" id="PS00472">
    <property type="entry name" value="SMALL_CYTOKINES_CC"/>
    <property type="match status" value="1"/>
</dbReference>
<sequence>MQSSTALLFLLLTVTSFTSQVLAHPGSIPTSCCFIMTSKKIPNTLLKSYKRITNNRCTLKAIVFKTRLGKEICADPKKKWVQDATKHLDQKLQTPKP</sequence>